<accession>B0UV09</accession>
<dbReference type="EC" id="3.4.23.36" evidence="1"/>
<dbReference type="EMBL" id="CP000947">
    <property type="protein sequence ID" value="ACA32158.1"/>
    <property type="molecule type" value="Genomic_DNA"/>
</dbReference>
<dbReference type="RefSeq" id="WP_012341344.1">
    <property type="nucleotide sequence ID" value="NC_010519.1"/>
</dbReference>
<dbReference type="SMR" id="B0UV09"/>
<dbReference type="STRING" id="228400.HSM_0051"/>
<dbReference type="GeneID" id="31486326"/>
<dbReference type="KEGG" id="hsm:HSM_0051"/>
<dbReference type="HOGENOM" id="CLU_083252_4_0_6"/>
<dbReference type="UniPathway" id="UPA00665"/>
<dbReference type="GO" id="GO:0005886">
    <property type="term" value="C:plasma membrane"/>
    <property type="evidence" value="ECO:0007669"/>
    <property type="project" value="UniProtKB-SubCell"/>
</dbReference>
<dbReference type="GO" id="GO:0004190">
    <property type="term" value="F:aspartic-type endopeptidase activity"/>
    <property type="evidence" value="ECO:0007669"/>
    <property type="project" value="UniProtKB-UniRule"/>
</dbReference>
<dbReference type="GO" id="GO:0006508">
    <property type="term" value="P:proteolysis"/>
    <property type="evidence" value="ECO:0007669"/>
    <property type="project" value="UniProtKB-KW"/>
</dbReference>
<dbReference type="HAMAP" id="MF_00161">
    <property type="entry name" value="LspA"/>
    <property type="match status" value="1"/>
</dbReference>
<dbReference type="InterPro" id="IPR001872">
    <property type="entry name" value="Peptidase_A8"/>
</dbReference>
<dbReference type="NCBIfam" id="TIGR00077">
    <property type="entry name" value="lspA"/>
    <property type="match status" value="1"/>
</dbReference>
<dbReference type="PANTHER" id="PTHR33695">
    <property type="entry name" value="LIPOPROTEIN SIGNAL PEPTIDASE"/>
    <property type="match status" value="1"/>
</dbReference>
<dbReference type="PANTHER" id="PTHR33695:SF1">
    <property type="entry name" value="LIPOPROTEIN SIGNAL PEPTIDASE"/>
    <property type="match status" value="1"/>
</dbReference>
<dbReference type="Pfam" id="PF01252">
    <property type="entry name" value="Peptidase_A8"/>
    <property type="match status" value="1"/>
</dbReference>
<dbReference type="PRINTS" id="PR00781">
    <property type="entry name" value="LIPOSIGPTASE"/>
</dbReference>
<protein>
    <recommendedName>
        <fullName evidence="1">Lipoprotein signal peptidase</fullName>
        <ecNumber evidence="1">3.4.23.36</ecNumber>
    </recommendedName>
    <alternativeName>
        <fullName evidence="1">Prolipoprotein signal peptidase</fullName>
    </alternativeName>
    <alternativeName>
        <fullName evidence="1">Signal peptidase II</fullName>
        <shortName evidence="1">SPase II</shortName>
    </alternativeName>
</protein>
<feature type="chain" id="PRO_1000097257" description="Lipoprotein signal peptidase">
    <location>
        <begin position="1"/>
        <end position="165"/>
    </location>
</feature>
<feature type="transmembrane region" description="Helical" evidence="1">
    <location>
        <begin position="9"/>
        <end position="29"/>
    </location>
</feature>
<feature type="transmembrane region" description="Helical" evidence="1">
    <location>
        <begin position="65"/>
        <end position="85"/>
    </location>
</feature>
<feature type="transmembrane region" description="Helical" evidence="1">
    <location>
        <begin position="97"/>
        <end position="119"/>
    </location>
</feature>
<feature type="transmembrane region" description="Helical" evidence="1">
    <location>
        <begin position="134"/>
        <end position="154"/>
    </location>
</feature>
<feature type="active site" evidence="1">
    <location>
        <position position="121"/>
    </location>
</feature>
<feature type="active site" evidence="1">
    <location>
        <position position="139"/>
    </location>
</feature>
<organism>
    <name type="scientific">Histophilus somni (strain 2336)</name>
    <name type="common">Haemophilus somnus</name>
    <dbReference type="NCBI Taxonomy" id="228400"/>
    <lineage>
        <taxon>Bacteria</taxon>
        <taxon>Pseudomonadati</taxon>
        <taxon>Pseudomonadota</taxon>
        <taxon>Gammaproteobacteria</taxon>
        <taxon>Pasteurellales</taxon>
        <taxon>Pasteurellaceae</taxon>
        <taxon>Histophilus</taxon>
    </lineage>
</organism>
<comment type="function">
    <text evidence="1">This protein specifically catalyzes the removal of signal peptides from prolipoproteins.</text>
</comment>
<comment type="catalytic activity">
    <reaction evidence="1">
        <text>Release of signal peptides from bacterial membrane prolipoproteins. Hydrolyzes -Xaa-Yaa-Zaa-|-(S,diacylglyceryl)Cys-, in which Xaa is hydrophobic (preferably Leu), and Yaa (Ala or Ser) and Zaa (Gly or Ala) have small, neutral side chains.</text>
        <dbReference type="EC" id="3.4.23.36"/>
    </reaction>
</comment>
<comment type="pathway">
    <text evidence="1">Protein modification; lipoprotein biosynthesis (signal peptide cleavage).</text>
</comment>
<comment type="subcellular location">
    <subcellularLocation>
        <location evidence="1">Cell inner membrane</location>
        <topology evidence="1">Multi-pass membrane protein</topology>
    </subcellularLocation>
</comment>
<comment type="similarity">
    <text evidence="1">Belongs to the peptidase A8 family.</text>
</comment>
<evidence type="ECO:0000255" key="1">
    <source>
        <dbReference type="HAMAP-Rule" id="MF_00161"/>
    </source>
</evidence>
<keyword id="KW-0064">Aspartyl protease</keyword>
<keyword id="KW-0997">Cell inner membrane</keyword>
<keyword id="KW-1003">Cell membrane</keyword>
<keyword id="KW-0378">Hydrolase</keyword>
<keyword id="KW-0472">Membrane</keyword>
<keyword id="KW-0645">Protease</keyword>
<keyword id="KW-0812">Transmembrane</keyword>
<keyword id="KW-1133">Transmembrane helix</keyword>
<name>LSPA_HISS2</name>
<proteinExistence type="inferred from homology"/>
<gene>
    <name evidence="1" type="primary">lspA</name>
    <name type="ordered locus">HSM_0051</name>
</gene>
<reference key="1">
    <citation type="submission" date="2008-02" db="EMBL/GenBank/DDBJ databases">
        <title>Complete sequence of Haemophilus somnus 2336.</title>
        <authorList>
            <consortium name="US DOE Joint Genome Institute"/>
            <person name="Siddaramappa S."/>
            <person name="Duncan A.J."/>
            <person name="Challacombe J.F."/>
            <person name="Rainey D."/>
            <person name="Gillaspy A.F."/>
            <person name="Carson M."/>
            <person name="Gipson J."/>
            <person name="Gipson M."/>
            <person name="Bruce D."/>
            <person name="Detter J.C."/>
            <person name="Han C.S."/>
            <person name="Land M."/>
            <person name="Tapia R."/>
            <person name="Thompson L.S."/>
            <person name="Orvis J."/>
            <person name="Zaitshik J."/>
            <person name="Barnes G."/>
            <person name="Brettin T.S."/>
            <person name="Dyer D.W."/>
            <person name="Inzana T.J."/>
        </authorList>
    </citation>
    <scope>NUCLEOTIDE SEQUENCE [LARGE SCALE GENOMIC DNA]</scope>
    <source>
        <strain>2336</strain>
    </source>
</reference>
<sequence>MNLSKTGLPFLWISAVAFFTDLITKLAVVKNFSLYESVNILPFFNLTYVRNHGAAFSFLADHAGWQKYFFILLALAVSFMILFFLYKNQATQKLQNTGYALMIGGALANAADRAYHGFVVDFFDFYWQQWHYPVFNVADIAICIGAGLLAIDAFKQNDKKESKQN</sequence>